<reference key="1">
    <citation type="journal article" date="2008" name="PLoS ONE">
        <title>Genome sequence of the saprophyte Leptospira biflexa provides insights into the evolution of Leptospira and the pathogenesis of leptospirosis.</title>
        <authorList>
            <person name="Picardeau M."/>
            <person name="Bulach D.M."/>
            <person name="Bouchier C."/>
            <person name="Zuerner R.L."/>
            <person name="Zidane N."/>
            <person name="Wilson P.J."/>
            <person name="Creno S."/>
            <person name="Kuczek E.S."/>
            <person name="Bommezzadri S."/>
            <person name="Davis J.C."/>
            <person name="McGrath A."/>
            <person name="Johnson M.J."/>
            <person name="Boursaux-Eude C."/>
            <person name="Seemann T."/>
            <person name="Rouy Z."/>
            <person name="Coppel R.L."/>
            <person name="Rood J.I."/>
            <person name="Lajus A."/>
            <person name="Davies J.K."/>
            <person name="Medigue C."/>
            <person name="Adler B."/>
        </authorList>
    </citation>
    <scope>NUCLEOTIDE SEQUENCE [LARGE SCALE GENOMIC DNA]</scope>
    <source>
        <strain>Patoc 1 / Ames</strain>
    </source>
</reference>
<organism>
    <name type="scientific">Leptospira biflexa serovar Patoc (strain Patoc 1 / Ames)</name>
    <dbReference type="NCBI Taxonomy" id="355278"/>
    <lineage>
        <taxon>Bacteria</taxon>
        <taxon>Pseudomonadati</taxon>
        <taxon>Spirochaetota</taxon>
        <taxon>Spirochaetia</taxon>
        <taxon>Leptospirales</taxon>
        <taxon>Leptospiraceae</taxon>
        <taxon>Leptospira</taxon>
    </lineage>
</organism>
<evidence type="ECO:0000255" key="1">
    <source>
        <dbReference type="HAMAP-Rule" id="MF_00146"/>
    </source>
</evidence>
<feature type="chain" id="PRO_1000117976" description="dCTP deaminase, dUMP-forming">
    <location>
        <begin position="1"/>
        <end position="174"/>
    </location>
</feature>
<feature type="active site" description="Proton donor/acceptor" evidence="1">
    <location>
        <position position="121"/>
    </location>
</feature>
<feature type="binding site" evidence="1">
    <location>
        <begin position="93"/>
        <end position="98"/>
    </location>
    <ligand>
        <name>dCTP</name>
        <dbReference type="ChEBI" id="CHEBI:61481"/>
    </ligand>
</feature>
<feature type="binding site" evidence="1">
    <location>
        <position position="111"/>
    </location>
    <ligand>
        <name>dCTP</name>
        <dbReference type="ChEBI" id="CHEBI:61481"/>
    </ligand>
</feature>
<feature type="binding site" evidence="1">
    <location>
        <begin position="119"/>
        <end position="121"/>
    </location>
    <ligand>
        <name>dCTP</name>
        <dbReference type="ChEBI" id="CHEBI:61481"/>
    </ligand>
</feature>
<feature type="binding site" evidence="1">
    <location>
        <position position="138"/>
    </location>
    <ligand>
        <name>dCTP</name>
        <dbReference type="ChEBI" id="CHEBI:61481"/>
    </ligand>
</feature>
<feature type="binding site" evidence="1">
    <location>
        <position position="151"/>
    </location>
    <ligand>
        <name>dCTP</name>
        <dbReference type="ChEBI" id="CHEBI:61481"/>
    </ligand>
</feature>
<feature type="site" description="Important for bifunctional activity" evidence="1">
    <location>
        <begin position="108"/>
        <end position="109"/>
    </location>
</feature>
<comment type="function">
    <text evidence="1">Bifunctional enzyme that catalyzes both the deamination of dCTP to dUTP and the hydrolysis of dUTP to dUMP without releasing the toxic dUTP intermediate.</text>
</comment>
<comment type="catalytic activity">
    <reaction evidence="1">
        <text>dCTP + 2 H2O = dUMP + NH4(+) + diphosphate</text>
        <dbReference type="Rhea" id="RHEA:19205"/>
        <dbReference type="ChEBI" id="CHEBI:15377"/>
        <dbReference type="ChEBI" id="CHEBI:28938"/>
        <dbReference type="ChEBI" id="CHEBI:33019"/>
        <dbReference type="ChEBI" id="CHEBI:61481"/>
        <dbReference type="ChEBI" id="CHEBI:246422"/>
        <dbReference type="EC" id="3.5.4.30"/>
    </reaction>
</comment>
<comment type="pathway">
    <text evidence="1">Pyrimidine metabolism; dUMP biosynthesis; dUMP from dCTP: step 1/1.</text>
</comment>
<comment type="subunit">
    <text evidence="1">Homotrimer.</text>
</comment>
<comment type="similarity">
    <text evidence="1">Belongs to the dCTP deaminase family.</text>
</comment>
<dbReference type="EC" id="3.5.4.30" evidence="1"/>
<dbReference type="EMBL" id="CP000777">
    <property type="protein sequence ID" value="ABZ95603.1"/>
    <property type="molecule type" value="Genomic_DNA"/>
</dbReference>
<dbReference type="RefSeq" id="WP_012390167.1">
    <property type="nucleotide sequence ID" value="NC_010842.1"/>
</dbReference>
<dbReference type="SMR" id="B0SH49"/>
<dbReference type="KEGG" id="lbf:LBF_3134"/>
<dbReference type="HOGENOM" id="CLU_087476_0_1_12"/>
<dbReference type="UniPathway" id="UPA00610">
    <property type="reaction ID" value="UER00667"/>
</dbReference>
<dbReference type="GO" id="GO:0033973">
    <property type="term" value="F:dCTP deaminase (dUMP-forming) activity"/>
    <property type="evidence" value="ECO:0007669"/>
    <property type="project" value="UniProtKB-UniRule"/>
</dbReference>
<dbReference type="GO" id="GO:0008829">
    <property type="term" value="F:dCTP deaminase activity"/>
    <property type="evidence" value="ECO:0007669"/>
    <property type="project" value="InterPro"/>
</dbReference>
<dbReference type="GO" id="GO:0000166">
    <property type="term" value="F:nucleotide binding"/>
    <property type="evidence" value="ECO:0007669"/>
    <property type="project" value="UniProtKB-KW"/>
</dbReference>
<dbReference type="GO" id="GO:0006226">
    <property type="term" value="P:dUMP biosynthetic process"/>
    <property type="evidence" value="ECO:0007669"/>
    <property type="project" value="UniProtKB-UniRule"/>
</dbReference>
<dbReference type="GO" id="GO:0006229">
    <property type="term" value="P:dUTP biosynthetic process"/>
    <property type="evidence" value="ECO:0007669"/>
    <property type="project" value="InterPro"/>
</dbReference>
<dbReference type="GO" id="GO:0015949">
    <property type="term" value="P:nucleobase-containing small molecule interconversion"/>
    <property type="evidence" value="ECO:0007669"/>
    <property type="project" value="TreeGrafter"/>
</dbReference>
<dbReference type="CDD" id="cd07557">
    <property type="entry name" value="trimeric_dUTPase"/>
    <property type="match status" value="1"/>
</dbReference>
<dbReference type="FunFam" id="2.70.40.10:FF:000009">
    <property type="entry name" value="dCTP deaminase, dUMP-forming"/>
    <property type="match status" value="1"/>
</dbReference>
<dbReference type="Gene3D" id="2.70.40.10">
    <property type="match status" value="1"/>
</dbReference>
<dbReference type="HAMAP" id="MF_00146">
    <property type="entry name" value="dCTP_deaminase"/>
    <property type="match status" value="1"/>
</dbReference>
<dbReference type="InterPro" id="IPR011962">
    <property type="entry name" value="dCTP_deaminase"/>
</dbReference>
<dbReference type="InterPro" id="IPR036157">
    <property type="entry name" value="dUTPase-like_sf"/>
</dbReference>
<dbReference type="InterPro" id="IPR033704">
    <property type="entry name" value="dUTPase_trimeric"/>
</dbReference>
<dbReference type="NCBIfam" id="TIGR02274">
    <property type="entry name" value="dCTP_deam"/>
    <property type="match status" value="1"/>
</dbReference>
<dbReference type="PANTHER" id="PTHR42680">
    <property type="entry name" value="DCTP DEAMINASE"/>
    <property type="match status" value="1"/>
</dbReference>
<dbReference type="PANTHER" id="PTHR42680:SF3">
    <property type="entry name" value="DCTP DEAMINASE"/>
    <property type="match status" value="1"/>
</dbReference>
<dbReference type="Pfam" id="PF22769">
    <property type="entry name" value="DCD"/>
    <property type="match status" value="1"/>
</dbReference>
<dbReference type="SUPFAM" id="SSF51283">
    <property type="entry name" value="dUTPase-like"/>
    <property type="match status" value="1"/>
</dbReference>
<accession>B0SH49</accession>
<protein>
    <recommendedName>
        <fullName evidence="1">dCTP deaminase, dUMP-forming</fullName>
        <ecNumber evidence="1">3.5.4.30</ecNumber>
    </recommendedName>
    <alternativeName>
        <fullName evidence="1">Bifunctional dCTP deaminase:dUTPase</fullName>
    </alternativeName>
    <alternativeName>
        <fullName evidence="1">DCD-DUT</fullName>
    </alternativeName>
</protein>
<gene>
    <name evidence="1" type="primary">dcd</name>
    <name type="ordered locus">LBF_3134</name>
</gene>
<sequence length="174" mass="19933">MILTGKEILKRLGSDIKIEPYDEKLLNPNSYNLRLHEDLLVYSEFPLDMKKPNPVRTLKIPEEGLLLEPGNLYLGRTIEFTETHNLVPMLEGRSSIGRLGMFVHITAGFGDVGFKGFWTLEIQVTHPLRVYSGVQICQIFYHTVEGEISEYKSGKYQANQGIQPSLLYKDFEKK</sequence>
<proteinExistence type="inferred from homology"/>
<keyword id="KW-0378">Hydrolase</keyword>
<keyword id="KW-0546">Nucleotide metabolism</keyword>
<keyword id="KW-0547">Nucleotide-binding</keyword>
<name>DCDB_LEPBA</name>